<protein>
    <recommendedName>
        <fullName evidence="1">Argininosuccinate lyase</fullName>
        <shortName evidence="1">ASAL</shortName>
        <ecNumber evidence="1">4.3.2.1</ecNumber>
    </recommendedName>
    <alternativeName>
        <fullName evidence="1">Arginosuccinase</fullName>
    </alternativeName>
</protein>
<reference key="1">
    <citation type="journal article" date="2010" name="PLoS ONE">
        <title>Genome sequence of Cronobacter sakazakii BAA-894 and comparative genomic hybridization analysis with other Cronobacter species.</title>
        <authorList>
            <person name="Kucerova E."/>
            <person name="Clifton S.W."/>
            <person name="Xia X.Q."/>
            <person name="Long F."/>
            <person name="Porwollik S."/>
            <person name="Fulton L."/>
            <person name="Fronick C."/>
            <person name="Minx P."/>
            <person name="Kyung K."/>
            <person name="Warren W."/>
            <person name="Fulton R."/>
            <person name="Feng D."/>
            <person name="Wollam A."/>
            <person name="Shah N."/>
            <person name="Bhonagiri V."/>
            <person name="Nash W.E."/>
            <person name="Hallsworth-Pepin K."/>
            <person name="Wilson R.K."/>
            <person name="McClelland M."/>
            <person name="Forsythe S.J."/>
        </authorList>
    </citation>
    <scope>NUCLEOTIDE SEQUENCE [LARGE SCALE GENOMIC DNA]</scope>
    <source>
        <strain>ATCC BAA-894</strain>
    </source>
</reference>
<name>ARLY_CROS8</name>
<evidence type="ECO:0000255" key="1">
    <source>
        <dbReference type="HAMAP-Rule" id="MF_00006"/>
    </source>
</evidence>
<sequence>MALWGGRFTQAADGRFKQFNDSLRFDYRLAEQDIIGSVAWSKALVTVGVLTAQEQSQLEGALNTLLEEVLENPHAILESDAEDIHSWVEGKLIDKVGPLGKKLHTGRSRNDQVATDLKLWCKTQVHALLSATRQLQQALVVTAEENQDAVMPGYTHLQRAQPVTFAHWCLAYVEMLARDESRLKDTLKRLDVSPLGSGALAGTAYEIDREQLAGWLGFASATRNSLDSVSDRDHVLELLSDAAISMVHLSRFAEDLIFFNSGEAGFVELSDRVTSGSSLMPQKKNPDALELIRGKCGRVQGALTGMMMTLKGLPLAYNKDMQEDKEGLFDALDTWLDCLHMAALVLDGIQVKRPRCQEAAQQGYANATELADYLVAKGVPFREAHHIVGEAVVEAIRQGKPLEDLALGDLQKFSPVISDDVYPVLSLQSCLDKRAAQGGVSPVQVAQAISAAKARLA</sequence>
<feature type="chain" id="PRO_1000000480" description="Argininosuccinate lyase">
    <location>
        <begin position="1"/>
        <end position="457"/>
    </location>
</feature>
<dbReference type="EC" id="4.3.2.1" evidence="1"/>
<dbReference type="EMBL" id="CP000783">
    <property type="protein sequence ID" value="ABU78992.1"/>
    <property type="molecule type" value="Genomic_DNA"/>
</dbReference>
<dbReference type="RefSeq" id="WP_007892504.1">
    <property type="nucleotide sequence ID" value="NC_009778.1"/>
</dbReference>
<dbReference type="SMR" id="A7ML84"/>
<dbReference type="GeneID" id="56732457"/>
<dbReference type="KEGG" id="esa:ESA_03806"/>
<dbReference type="HOGENOM" id="CLU_027272_2_3_6"/>
<dbReference type="UniPathway" id="UPA00068">
    <property type="reaction ID" value="UER00114"/>
</dbReference>
<dbReference type="Proteomes" id="UP000000260">
    <property type="component" value="Chromosome"/>
</dbReference>
<dbReference type="GO" id="GO:0005829">
    <property type="term" value="C:cytosol"/>
    <property type="evidence" value="ECO:0007669"/>
    <property type="project" value="TreeGrafter"/>
</dbReference>
<dbReference type="GO" id="GO:0004056">
    <property type="term" value="F:argininosuccinate lyase activity"/>
    <property type="evidence" value="ECO:0007669"/>
    <property type="project" value="UniProtKB-UniRule"/>
</dbReference>
<dbReference type="GO" id="GO:0042450">
    <property type="term" value="P:arginine biosynthetic process via ornithine"/>
    <property type="evidence" value="ECO:0007669"/>
    <property type="project" value="InterPro"/>
</dbReference>
<dbReference type="GO" id="GO:0006526">
    <property type="term" value="P:L-arginine biosynthetic process"/>
    <property type="evidence" value="ECO:0007669"/>
    <property type="project" value="UniProtKB-UniRule"/>
</dbReference>
<dbReference type="CDD" id="cd01359">
    <property type="entry name" value="Argininosuccinate_lyase"/>
    <property type="match status" value="1"/>
</dbReference>
<dbReference type="FunFam" id="1.10.40.30:FF:000001">
    <property type="entry name" value="Argininosuccinate lyase"/>
    <property type="match status" value="1"/>
</dbReference>
<dbReference type="FunFam" id="1.20.200.10:FF:000006">
    <property type="entry name" value="Argininosuccinate lyase"/>
    <property type="match status" value="1"/>
</dbReference>
<dbReference type="Gene3D" id="1.10.40.30">
    <property type="entry name" value="Fumarase/aspartase (C-terminal domain)"/>
    <property type="match status" value="1"/>
</dbReference>
<dbReference type="Gene3D" id="1.20.200.10">
    <property type="entry name" value="Fumarase/aspartase (Central domain)"/>
    <property type="match status" value="1"/>
</dbReference>
<dbReference type="Gene3D" id="1.10.275.10">
    <property type="entry name" value="Fumarase/aspartase (N-terminal domain)"/>
    <property type="match status" value="1"/>
</dbReference>
<dbReference type="HAMAP" id="MF_00006">
    <property type="entry name" value="Arg_succ_lyase"/>
    <property type="match status" value="1"/>
</dbReference>
<dbReference type="InterPro" id="IPR029419">
    <property type="entry name" value="Arg_succ_lyase_C"/>
</dbReference>
<dbReference type="InterPro" id="IPR009049">
    <property type="entry name" value="Argininosuccinate_lyase"/>
</dbReference>
<dbReference type="InterPro" id="IPR024083">
    <property type="entry name" value="Fumarase/histidase_N"/>
</dbReference>
<dbReference type="InterPro" id="IPR020557">
    <property type="entry name" value="Fumarate_lyase_CS"/>
</dbReference>
<dbReference type="InterPro" id="IPR000362">
    <property type="entry name" value="Fumarate_lyase_fam"/>
</dbReference>
<dbReference type="InterPro" id="IPR022761">
    <property type="entry name" value="Fumarate_lyase_N"/>
</dbReference>
<dbReference type="InterPro" id="IPR008948">
    <property type="entry name" value="L-Aspartase-like"/>
</dbReference>
<dbReference type="NCBIfam" id="TIGR00838">
    <property type="entry name" value="argH"/>
    <property type="match status" value="1"/>
</dbReference>
<dbReference type="NCBIfam" id="NF008964">
    <property type="entry name" value="PRK12308.1"/>
    <property type="match status" value="1"/>
</dbReference>
<dbReference type="PANTHER" id="PTHR43814">
    <property type="entry name" value="ARGININOSUCCINATE LYASE"/>
    <property type="match status" value="1"/>
</dbReference>
<dbReference type="PANTHER" id="PTHR43814:SF1">
    <property type="entry name" value="ARGININOSUCCINATE LYASE"/>
    <property type="match status" value="1"/>
</dbReference>
<dbReference type="Pfam" id="PF14698">
    <property type="entry name" value="ASL_C2"/>
    <property type="match status" value="1"/>
</dbReference>
<dbReference type="Pfam" id="PF00206">
    <property type="entry name" value="Lyase_1"/>
    <property type="match status" value="1"/>
</dbReference>
<dbReference type="PRINTS" id="PR00145">
    <property type="entry name" value="ARGSUCLYASE"/>
</dbReference>
<dbReference type="PRINTS" id="PR00149">
    <property type="entry name" value="FUMRATELYASE"/>
</dbReference>
<dbReference type="SUPFAM" id="SSF48557">
    <property type="entry name" value="L-aspartase-like"/>
    <property type="match status" value="1"/>
</dbReference>
<dbReference type="PROSITE" id="PS00163">
    <property type="entry name" value="FUMARATE_LYASES"/>
    <property type="match status" value="1"/>
</dbReference>
<gene>
    <name evidence="1" type="primary">argH</name>
    <name type="ordered locus">ESA_03806</name>
</gene>
<proteinExistence type="inferred from homology"/>
<comment type="catalytic activity">
    <reaction evidence="1">
        <text>2-(N(omega)-L-arginino)succinate = fumarate + L-arginine</text>
        <dbReference type="Rhea" id="RHEA:24020"/>
        <dbReference type="ChEBI" id="CHEBI:29806"/>
        <dbReference type="ChEBI" id="CHEBI:32682"/>
        <dbReference type="ChEBI" id="CHEBI:57472"/>
        <dbReference type="EC" id="4.3.2.1"/>
    </reaction>
</comment>
<comment type="pathway">
    <text evidence="1">Amino-acid biosynthesis; L-arginine biosynthesis; L-arginine from L-ornithine and carbamoyl phosphate: step 3/3.</text>
</comment>
<comment type="subcellular location">
    <subcellularLocation>
        <location evidence="1">Cytoplasm</location>
    </subcellularLocation>
</comment>
<comment type="similarity">
    <text evidence="1">Belongs to the lyase 1 family. Argininosuccinate lyase subfamily.</text>
</comment>
<accession>A7ML84</accession>
<keyword id="KW-0028">Amino-acid biosynthesis</keyword>
<keyword id="KW-0055">Arginine biosynthesis</keyword>
<keyword id="KW-0963">Cytoplasm</keyword>
<keyword id="KW-0456">Lyase</keyword>
<keyword id="KW-1185">Reference proteome</keyword>
<organism>
    <name type="scientific">Cronobacter sakazakii (strain ATCC BAA-894)</name>
    <name type="common">Enterobacter sakazakii</name>
    <dbReference type="NCBI Taxonomy" id="290339"/>
    <lineage>
        <taxon>Bacteria</taxon>
        <taxon>Pseudomonadati</taxon>
        <taxon>Pseudomonadota</taxon>
        <taxon>Gammaproteobacteria</taxon>
        <taxon>Enterobacterales</taxon>
        <taxon>Enterobacteriaceae</taxon>
        <taxon>Cronobacter</taxon>
    </lineage>
</organism>